<reference key="1">
    <citation type="journal article" date="2015" name="Genome Announc.">
        <title>Genome sequence of the AIDS-associated pathogen Penicillium marneffei (ATCC18224) and its near taxonomic relative Talaromyces stipitatus (ATCC10500).</title>
        <authorList>
            <person name="Nierman W.C."/>
            <person name="Fedorova-Abrams N.D."/>
            <person name="Andrianopoulos A."/>
        </authorList>
    </citation>
    <scope>NUCLEOTIDE SEQUENCE [LARGE SCALE GENOMIC DNA]</scope>
    <source>
        <strain>ATCC 18224 / CBS 334.59 / QM 7333</strain>
    </source>
</reference>
<feature type="chain" id="PRO_0000410390" description="High osmolarity signaling protein sho1">
    <location>
        <begin position="1"/>
        <end position="282"/>
    </location>
</feature>
<feature type="topological domain" description="Cytoplasmic" evidence="2">
    <location>
        <begin position="1"/>
        <end position="14"/>
    </location>
</feature>
<feature type="transmembrane region" description="Helical" evidence="2">
    <location>
        <begin position="15"/>
        <end position="35"/>
    </location>
</feature>
<feature type="topological domain" description="Extracellular" evidence="2">
    <location>
        <begin position="36"/>
        <end position="44"/>
    </location>
</feature>
<feature type="transmembrane region" description="Helical" evidence="2">
    <location>
        <begin position="45"/>
        <end position="65"/>
    </location>
</feature>
<feature type="topological domain" description="Cytoplasmic" evidence="2">
    <location>
        <begin position="66"/>
        <end position="74"/>
    </location>
</feature>
<feature type="transmembrane region" description="Helical" evidence="2">
    <location>
        <begin position="75"/>
        <end position="95"/>
    </location>
</feature>
<feature type="topological domain" description="Extracellular" evidence="2">
    <location>
        <begin position="96"/>
        <end position="103"/>
    </location>
</feature>
<feature type="transmembrane region" description="Helical" evidence="2">
    <location>
        <begin position="104"/>
        <end position="124"/>
    </location>
</feature>
<feature type="topological domain" description="Cytoplasmic" evidence="2">
    <location>
        <begin position="125"/>
        <end position="282"/>
    </location>
</feature>
<feature type="domain" description="SH3" evidence="3">
    <location>
        <begin position="223"/>
        <end position="282"/>
    </location>
</feature>
<feature type="region of interest" description="Disordered" evidence="4">
    <location>
        <begin position="144"/>
        <end position="220"/>
    </location>
</feature>
<feature type="compositionally biased region" description="Polar residues" evidence="4">
    <location>
        <begin position="146"/>
        <end position="182"/>
    </location>
</feature>
<feature type="compositionally biased region" description="Polar residues" evidence="4">
    <location>
        <begin position="201"/>
        <end position="220"/>
    </location>
</feature>
<keyword id="KW-1003">Cell membrane</keyword>
<keyword id="KW-0472">Membrane</keyword>
<keyword id="KW-1185">Reference proteome</keyword>
<keyword id="KW-0728">SH3 domain</keyword>
<keyword id="KW-0346">Stress response</keyword>
<keyword id="KW-0812">Transmembrane</keyword>
<keyword id="KW-1133">Transmembrane helix</keyword>
<comment type="function">
    <text evidence="1">Plasma membrane osmosensor that activates the high osmolarity glycerol (HOG) MAPK signaling pathway in response to high osmolarity.</text>
</comment>
<comment type="subunit">
    <text evidence="1">Forms homooligomers.</text>
</comment>
<comment type="subcellular location">
    <subcellularLocation>
        <location evidence="1">Cell membrane</location>
        <topology evidence="1">Multi-pass membrane protein</topology>
    </subcellularLocation>
</comment>
<comment type="similarity">
    <text evidence="5">Belongs to the SHO1 family.</text>
</comment>
<organism>
    <name type="scientific">Talaromyces marneffei (strain ATCC 18224 / CBS 334.59 / QM 7333)</name>
    <name type="common">Penicillium marneffei</name>
    <dbReference type="NCBI Taxonomy" id="441960"/>
    <lineage>
        <taxon>Eukaryota</taxon>
        <taxon>Fungi</taxon>
        <taxon>Dikarya</taxon>
        <taxon>Ascomycota</taxon>
        <taxon>Pezizomycotina</taxon>
        <taxon>Eurotiomycetes</taxon>
        <taxon>Eurotiomycetidae</taxon>
        <taxon>Eurotiales</taxon>
        <taxon>Trichocomaceae</taxon>
        <taxon>Talaromyces</taxon>
        <taxon>Talaromyces sect. Talaromyces</taxon>
    </lineage>
</organism>
<accession>B6QEE0</accession>
<gene>
    <name type="primary">sho1</name>
    <name type="ORF">PMAA_079680</name>
</gene>
<name>SHO1_TALMQ</name>
<proteinExistence type="inferred from homology"/>
<protein>
    <recommendedName>
        <fullName>High osmolarity signaling protein sho1</fullName>
    </recommendedName>
    <alternativeName>
        <fullName>Osmosensor sho1</fullName>
    </alternativeName>
</protein>
<dbReference type="EMBL" id="DS995901">
    <property type="protein sequence ID" value="EEA23946.1"/>
    <property type="molecule type" value="Genomic_DNA"/>
</dbReference>
<dbReference type="RefSeq" id="XP_002147457.1">
    <property type="nucleotide sequence ID" value="XM_002147421.1"/>
</dbReference>
<dbReference type="SMR" id="B6QEE0"/>
<dbReference type="STRING" id="441960.B6QEE0"/>
<dbReference type="VEuPathDB" id="FungiDB:PMAA_079680"/>
<dbReference type="HOGENOM" id="CLU_043316_1_0_1"/>
<dbReference type="OrthoDB" id="5139at28568"/>
<dbReference type="PhylomeDB" id="B6QEE0"/>
<dbReference type="Proteomes" id="UP000001294">
    <property type="component" value="Unassembled WGS sequence"/>
</dbReference>
<dbReference type="GO" id="GO:0005886">
    <property type="term" value="C:plasma membrane"/>
    <property type="evidence" value="ECO:0007669"/>
    <property type="project" value="UniProtKB-SubCell"/>
</dbReference>
<dbReference type="GO" id="GO:0030833">
    <property type="term" value="P:regulation of actin filament polymerization"/>
    <property type="evidence" value="ECO:0007669"/>
    <property type="project" value="TreeGrafter"/>
</dbReference>
<dbReference type="CDD" id="cd11855">
    <property type="entry name" value="SH3_Sho1p"/>
    <property type="match status" value="1"/>
</dbReference>
<dbReference type="FunFam" id="2.30.30.40:FF:000213">
    <property type="entry name" value="High osmolarity signaling protein SHO1"/>
    <property type="match status" value="1"/>
</dbReference>
<dbReference type="Gene3D" id="2.30.30.40">
    <property type="entry name" value="SH3 Domains"/>
    <property type="match status" value="1"/>
</dbReference>
<dbReference type="InterPro" id="IPR036028">
    <property type="entry name" value="SH3-like_dom_sf"/>
</dbReference>
<dbReference type="InterPro" id="IPR001452">
    <property type="entry name" value="SH3_domain"/>
</dbReference>
<dbReference type="InterPro" id="IPR035522">
    <property type="entry name" value="Sho1_SH3"/>
</dbReference>
<dbReference type="PANTHER" id="PTHR15735">
    <property type="entry name" value="FCH AND DOUBLE SH3 DOMAINS PROTEIN"/>
    <property type="match status" value="1"/>
</dbReference>
<dbReference type="PANTHER" id="PTHR15735:SF20">
    <property type="entry name" value="HIGH OSMOLARITY SIGNALING PROTEIN SHO1"/>
    <property type="match status" value="1"/>
</dbReference>
<dbReference type="Pfam" id="PF00018">
    <property type="entry name" value="SH3_1"/>
    <property type="match status" value="1"/>
</dbReference>
<dbReference type="PRINTS" id="PR00452">
    <property type="entry name" value="SH3DOMAIN"/>
</dbReference>
<dbReference type="SMART" id="SM00326">
    <property type="entry name" value="SH3"/>
    <property type="match status" value="1"/>
</dbReference>
<dbReference type="SUPFAM" id="SSF50044">
    <property type="entry name" value="SH3-domain"/>
    <property type="match status" value="1"/>
</dbReference>
<dbReference type="PROSITE" id="PS50002">
    <property type="entry name" value="SH3"/>
    <property type="match status" value="1"/>
</dbReference>
<evidence type="ECO:0000250" key="1"/>
<evidence type="ECO:0000255" key="2"/>
<evidence type="ECO:0000255" key="3">
    <source>
        <dbReference type="PROSITE-ProRule" id="PRU00192"/>
    </source>
</evidence>
<evidence type="ECO:0000256" key="4">
    <source>
        <dbReference type="SAM" id="MobiDB-lite"/>
    </source>
</evidence>
<evidence type="ECO:0000305" key="5"/>
<sequence length="282" mass="30417">MARFSTSNILGDPFALATISISILAWLISFIGSIIANVQTDFPNYVWWAVAYMICVITGIIIVTGSDTSLTYGNAITGYLSAGLVFTTLAVNSLVYQPQSSKQAAAAGFILLSMVIIIWIFYFGSTPQASHRRTIDSFALNKEGKSYQNSRPQSNGFGTRPGTTVSQPPQMYTSAQLNGFETSSPMSGYPGGPPGSDKRNTTATNFPTGGNVDSSNEVSQPTEYPYKAKAIYSYDANPDDANEISFAKGEELEVSDVSGRWWQARRANGETGIAPSNYLILL</sequence>